<organism>
    <name type="scientific">Mus musculus</name>
    <name type="common">Mouse</name>
    <dbReference type="NCBI Taxonomy" id="10090"/>
    <lineage>
        <taxon>Eukaryota</taxon>
        <taxon>Metazoa</taxon>
        <taxon>Chordata</taxon>
        <taxon>Craniata</taxon>
        <taxon>Vertebrata</taxon>
        <taxon>Euteleostomi</taxon>
        <taxon>Mammalia</taxon>
        <taxon>Eutheria</taxon>
        <taxon>Euarchontoglires</taxon>
        <taxon>Glires</taxon>
        <taxon>Rodentia</taxon>
        <taxon>Myomorpha</taxon>
        <taxon>Muroidea</taxon>
        <taxon>Muridae</taxon>
        <taxon>Murinae</taxon>
        <taxon>Mus</taxon>
        <taxon>Mus</taxon>
    </lineage>
</organism>
<keyword id="KW-0002">3D-structure</keyword>
<keyword id="KW-0903">Direct protein sequencing</keyword>
<keyword id="KW-1015">Disulfide bond</keyword>
<keyword id="KW-0588">Pheromone</keyword>
<keyword id="KW-0590">Pheromone-binding</keyword>
<keyword id="KW-1185">Reference proteome</keyword>
<keyword id="KW-0964">Secreted</keyword>
<keyword id="KW-0732">Signal</keyword>
<feature type="signal peptide" evidence="1">
    <location>
        <begin position="1"/>
        <end position="19"/>
    </location>
</feature>
<feature type="chain" id="PRO_0000398791" description="Major urinary protein 20" evidence="1">
    <location>
        <begin position="20"/>
        <end position="181"/>
    </location>
</feature>
<feature type="disulfide bond" evidence="7 19">
    <location>
        <begin position="83"/>
        <end position="176"/>
    </location>
</feature>
<feature type="helix" evidence="20">
    <location>
        <begin position="31"/>
        <end position="34"/>
    </location>
</feature>
<feature type="strand" evidence="20">
    <location>
        <begin position="35"/>
        <end position="37"/>
    </location>
</feature>
<feature type="strand" evidence="20">
    <location>
        <begin position="40"/>
        <end position="46"/>
    </location>
</feature>
<feature type="turn" evidence="20">
    <location>
        <begin position="48"/>
        <end position="51"/>
    </location>
</feature>
<feature type="strand" evidence="20">
    <location>
        <begin position="60"/>
        <end position="66"/>
    </location>
</feature>
<feature type="strand" evidence="20">
    <location>
        <begin position="68"/>
        <end position="76"/>
    </location>
</feature>
<feature type="strand" evidence="20">
    <location>
        <begin position="80"/>
        <end position="82"/>
    </location>
</feature>
<feature type="strand" evidence="20">
    <location>
        <begin position="88"/>
        <end position="92"/>
    </location>
</feature>
<feature type="strand" evidence="20">
    <location>
        <begin position="98"/>
        <end position="110"/>
    </location>
</feature>
<feature type="strand" evidence="20">
    <location>
        <begin position="116"/>
        <end position="128"/>
    </location>
</feature>
<feature type="strand" evidence="20">
    <location>
        <begin position="131"/>
        <end position="144"/>
    </location>
</feature>
<feature type="helix" evidence="20">
    <location>
        <begin position="147"/>
        <end position="157"/>
    </location>
</feature>
<feature type="helix" evidence="20">
    <location>
        <begin position="158"/>
        <end position="160"/>
    </location>
</feature>
<feature type="turn" evidence="20">
    <location>
        <begin position="164"/>
        <end position="166"/>
    </location>
</feature>
<feature type="helix" evidence="20">
    <location>
        <begin position="170"/>
        <end position="172"/>
    </location>
</feature>
<feature type="turn" evidence="20">
    <location>
        <begin position="177"/>
        <end position="179"/>
    </location>
</feature>
<gene>
    <name evidence="18" type="primary">Mup20</name>
    <name evidence="17" type="synonym">Mup24</name>
</gene>
<name>MUP20_MOUSE</name>
<reference evidence="15" key="1">
    <citation type="journal article" date="2008" name="PLoS ONE">
        <title>Species specificity in major urinary proteins by parallel evolution.</title>
        <authorList>
            <person name="Logan D.W."/>
            <person name="Marton T.F."/>
            <person name="Stowers L."/>
        </authorList>
    </citation>
    <scope>NUCLEOTIDE SEQUENCE [MRNA]</scope>
    <source>
        <strain evidence="15">C57BL/6J</strain>
        <tissue evidence="15">Liver</tissue>
        <tissue evidence="15">Submandibular gland</tissue>
    </source>
</reference>
<reference evidence="16" key="2">
    <citation type="journal article" date="2009" name="PLoS Biol.">
        <title>Lineage-specific biology revealed by a finished genome assembly of the mouse.</title>
        <authorList>
            <person name="Church D.M."/>
            <person name="Goodstadt L."/>
            <person name="Hillier L.W."/>
            <person name="Zody M.C."/>
            <person name="Goldstein S."/>
            <person name="She X."/>
            <person name="Bult C.J."/>
            <person name="Agarwala R."/>
            <person name="Cherry J.L."/>
            <person name="DiCuccio M."/>
            <person name="Hlavina W."/>
            <person name="Kapustin Y."/>
            <person name="Meric P."/>
            <person name="Maglott D."/>
            <person name="Birtle Z."/>
            <person name="Marques A.C."/>
            <person name="Graves T."/>
            <person name="Zhou S."/>
            <person name="Teague B."/>
            <person name="Potamousis K."/>
            <person name="Churas C."/>
            <person name="Place M."/>
            <person name="Herschleb J."/>
            <person name="Runnheim R."/>
            <person name="Forrest D."/>
            <person name="Amos-Landgraf J."/>
            <person name="Schwartz D.C."/>
            <person name="Cheng Z."/>
            <person name="Lindblad-Toh K."/>
            <person name="Eichler E.E."/>
            <person name="Ponting C.P."/>
        </authorList>
    </citation>
    <scope>NUCLEOTIDE SEQUENCE [LARGE SCALE GENOMIC DNA]</scope>
    <source>
        <strain>C57BL/6J</strain>
    </source>
</reference>
<reference evidence="13" key="3">
    <citation type="journal article" date="2004" name="Genome Res.">
        <title>The status, quality, and expansion of the NIH full-length cDNA project: the Mammalian Gene Collection (MGC).</title>
        <authorList>
            <consortium name="The MGC Project Team"/>
        </authorList>
    </citation>
    <scope>NUCLEOTIDE SEQUENCE [LARGE SCALE MRNA]</scope>
    <source>
        <strain evidence="14">FVB/N</strain>
        <tissue evidence="13">Liver</tissue>
    </source>
</reference>
<reference evidence="12" key="4">
    <citation type="journal article" date="2005" name="Biochem. J.">
        <title>Structural and functional differences in isoforms of mouse major urinary proteins: a male-specific protein that preferentially binds a male pheromone.</title>
        <authorList>
            <person name="Armstrong S.D."/>
            <person name="Robertson D.H."/>
            <person name="Cheetham S.A."/>
            <person name="Hurst J.L."/>
            <person name="Beynon R.J."/>
        </authorList>
    </citation>
    <scope>PROTEIN SEQUENCE OF 59-74 AND 129-141</scope>
    <scope>FUNCTION</scope>
    <scope>SUBCELLULAR LOCATION</scope>
    <scope>TISSUE SPECIFICITY</scope>
    <scope>MASS SPECTROMETRY</scope>
    <source>
        <strain evidence="3">C57BL/6J</strain>
        <tissue evidence="3">Urine</tissue>
    </source>
</reference>
<reference evidence="17" key="5">
    <citation type="journal article" date="2007" name="Nature">
        <title>Identification of protein pheromones that promote aggressive behaviour.</title>
        <authorList>
            <person name="Chamero P."/>
            <person name="Marton T.F."/>
            <person name="Logan D.W."/>
            <person name="Flanagan K."/>
            <person name="Cruz J.R."/>
            <person name="Saghatelian A."/>
            <person name="Cravatt B.F."/>
            <person name="Stowers L."/>
        </authorList>
    </citation>
    <scope>FUNCTION</scope>
    <source>
        <tissue evidence="4">Urine</tissue>
    </source>
</reference>
<reference evidence="12" key="6">
    <citation type="journal article" date="2010" name="BMC Biol.">
        <title>Darcin: a male pheromone that stimulates female memory and sexual attraction to an individual male's odour.</title>
        <authorList>
            <person name="Roberts S.A."/>
            <person name="Simpson D.M."/>
            <person name="Armstrong S.D."/>
            <person name="Davidson A.J."/>
            <person name="Robertson D.H."/>
            <person name="McLean L."/>
            <person name="Beynon R.J."/>
            <person name="Hurst J.L."/>
        </authorList>
    </citation>
    <scope>FUNCTION</scope>
    <scope>SUBCELLULAR LOCATION</scope>
    <scope>TISSUE SPECIFICITY</scope>
    <scope>IDENTIFICATION BY MASS SPECTROMETRY</scope>
    <source>
        <strain evidence="5">C57BL/6J</strain>
        <tissue evidence="5">Urine</tissue>
    </source>
</reference>
<reference key="7">
    <citation type="journal article" date="2010" name="Cell">
        <title>A tissue-specific atlas of mouse protein phosphorylation and expression.</title>
        <authorList>
            <person name="Huttlin E.L."/>
            <person name="Jedrychowski M.P."/>
            <person name="Elias J.E."/>
            <person name="Goswami T."/>
            <person name="Rad R."/>
            <person name="Beausoleil S.A."/>
            <person name="Villen J."/>
            <person name="Haas W."/>
            <person name="Sowa M.E."/>
            <person name="Gygi S.P."/>
        </authorList>
    </citation>
    <scope>IDENTIFICATION BY MASS SPECTROMETRY [LARGE SCALE ANALYSIS]</scope>
    <source>
        <tissue>Liver</tissue>
    </source>
</reference>
<reference key="8">
    <citation type="journal article" date="2012" name="Science">
        <title>Pheromonal induction of spatial learning in mice.</title>
        <authorList>
            <person name="Roberts S.A."/>
            <person name="Davidson A.J."/>
            <person name="McLean L."/>
            <person name="Beynon R.J."/>
            <person name="Hurst J.L."/>
        </authorList>
    </citation>
    <scope>FUNCTION</scope>
</reference>
<reference key="9">
    <citation type="journal article" date="2015" name="Front. Behav. Neurosci.">
        <title>The male sex pheromone darcin stimulates hippocampal neurogenesis and cell proliferation in the subventricular zone in female mice.</title>
        <authorList>
            <person name="Hoffman E."/>
            <person name="Pickavance L."/>
            <person name="Thippeswamy T."/>
            <person name="Beynon R.J."/>
            <person name="Hurst J.L."/>
        </authorList>
    </citation>
    <scope>FUNCTION</scope>
</reference>
<reference key="10">
    <citation type="journal article" date="2017" name="Sci. Rep.">
        <title>Quantitative inheritance of volatile pheromones and darcin and their interaction in olfactory preferences of female mice.</title>
        <authorList>
            <person name="Liu Y.J."/>
            <person name="Guo H.F."/>
            <person name="Zhang J.X."/>
            <person name="Zhang Y.H."/>
        </authorList>
    </citation>
    <scope>SUBCELLULAR LOCATION</scope>
    <scope>TISSUE SPECIFICITY</scope>
    <scope>POLYMORPHISM</scope>
</reference>
<reference key="11">
    <citation type="journal article" date="2018" name="Sci. Rep.">
        <authorList>
            <person name="Liu Y.J."/>
            <person name="Guo H.F."/>
            <person name="Zhang J.X."/>
            <person name="Zhang Y.H."/>
        </authorList>
    </citation>
    <scope>ERRATUM OF PUBMED:28522864</scope>
</reference>
<reference key="12">
    <citation type="journal article" date="2020" name="Nature">
        <title>The pheromone darcin drives a circuit for innate and reinforced behaviours.</title>
        <authorList>
            <person name="Demir E."/>
            <person name="Li K."/>
            <person name="Bobrowski-Khoury N."/>
            <person name="Sanders J.I."/>
            <person name="Beynon R.J."/>
            <person name="Hurst J.L."/>
            <person name="Kepecs A."/>
            <person name="Axel R."/>
        </authorList>
    </citation>
    <scope>FUNCTION</scope>
</reference>
<reference key="13">
    <citation type="journal article" date="2014" name="PLoS ONE">
        <title>The structure, stability and pheromone binding of the male mouse protein sex pheromone darcin.</title>
        <authorList>
            <person name="Phelan M.M."/>
            <person name="McLean L."/>
            <person name="Armstrong S.D."/>
            <person name="Hurst J.L."/>
            <person name="Beynon R.J."/>
            <person name="Lian L.Y."/>
        </authorList>
    </citation>
    <scope>STRUCTURE BY NMR OF 20-181</scope>
    <scope>FUNCTION</scope>
    <scope>SUBCELLULAR LOCATION</scope>
    <scope>TISSUE SPECIFICITY</scope>
    <scope>POLYMORPHISM</scope>
    <scope>DISULFIDE BOND</scope>
</reference>
<comment type="function">
    <text evidence="3 4 5 6 7 8 10">Male pheromone which stimulates female sexual attraction to male urinary scent and promotes a strong learned attraction to the airborne urinary odor of an individual male (PubMed:20525243, PubMed:31996852). Promotes spatial learning by rapidly conditioning preference for its remembered location among females and competitor males so that animals prefer to spend time in the site even when scent is absent (PubMed:23239735). In addition to promoting a rapid attraction response, also elicits ultrasonic vocalizations and urinary scent marking in females which do not occur immediately after exposure (PubMed:31996852). Stimulates hippocampal neurogenesis and cell proliferation in the subventricular zone in females (PubMed:25972792). Promotes male aggressive behavior (PubMed:18064011). Response to Mup20 is mediated by a neural circuit extending from the accessory olfactory bulb to a subset of nitric oxidase synthase-expressing neurons in the medial amygdala (PubMed:31996852). As well as acting as a pheromone itself, binds most of the male pheromone, 2-sec-butyl-4,5-dihydrothiazole, in urine and is responsible for its slow release from scent marks (PubMed:15934926, PubMed:25279835).</text>
</comment>
<comment type="subcellular location">
    <subcellularLocation>
        <location evidence="3 5 7 9">Secreted</location>
    </subcellularLocation>
</comment>
<comment type="tissue specificity">
    <text evidence="3 5 7 9">Detected in urine of males but absent from female urine (at protein level).</text>
</comment>
<comment type="mass spectrometry" mass="18894.0" error="2.0" method="Electrospray" evidence="3"/>
<comment type="polymorphism">
    <text evidence="7 9">Constitutes approximately 10% of the total major urinary protein composition in the urine of C57BL/6 males but is barely detectable in the urine of BALB/c males.</text>
</comment>
<comment type="similarity">
    <text evidence="2">Belongs to the calycin superfamily. Lipocalin family.</text>
</comment>
<sequence length="181" mass="20930">MKLLVLLLCLGLTLVCVHAEEASSMERNFNVEKINGEWYTIMLATDKREKIEEHGSMRVFVEYIHVLENSLALKFHIIINEECSEIFLVADKTEKAGEYSVTYDGSNTFTILKTDYDNYIMIHLINKKDGETFQLMELYGREPDLSSDIKEKFAQLSEEHGIVRENIIDLTNANRCLEARE</sequence>
<dbReference type="EMBL" id="EU882234">
    <property type="protein sequence ID" value="ACF70718.1"/>
    <property type="molecule type" value="mRNA"/>
</dbReference>
<dbReference type="EMBL" id="BX088584">
    <property type="status" value="NOT_ANNOTATED_CDS"/>
    <property type="molecule type" value="Genomic_DNA"/>
</dbReference>
<dbReference type="EMBL" id="CT990635">
    <property type="protein sequence ID" value="CAP58483.1"/>
    <property type="molecule type" value="Genomic_DNA"/>
</dbReference>
<dbReference type="EMBL" id="CT990636">
    <property type="protein sequence ID" value="CAQ11567.1"/>
    <property type="molecule type" value="Genomic_DNA"/>
</dbReference>
<dbReference type="EMBL" id="BC089613">
    <property type="protein sequence ID" value="AAH89613.1"/>
    <property type="molecule type" value="mRNA"/>
</dbReference>
<dbReference type="EMBL" id="BC092096">
    <property type="protein sequence ID" value="AAH92096.1"/>
    <property type="molecule type" value="mRNA"/>
</dbReference>
<dbReference type="EMBL" id="BK006677">
    <property type="protein sequence ID" value="DAA06315.1"/>
    <property type="molecule type" value="Genomic_DNA"/>
</dbReference>
<dbReference type="CCDS" id="CCDS18233.1"/>
<dbReference type="RefSeq" id="NP_001012323.1">
    <property type="nucleotide sequence ID" value="NM_001012323.1"/>
</dbReference>
<dbReference type="RefSeq" id="XP_006538108.1">
    <property type="nucleotide sequence ID" value="XM_006538045.4"/>
</dbReference>
<dbReference type="PDB" id="2L9C">
    <property type="method" value="NMR"/>
    <property type="chains" value="A=20-181"/>
</dbReference>
<dbReference type="PDBsum" id="2L9C"/>
<dbReference type="BMRB" id="Q5FW60"/>
<dbReference type="SMR" id="Q5FW60"/>
<dbReference type="FunCoup" id="Q5FW60">
    <property type="interactions" value="349"/>
</dbReference>
<dbReference type="STRING" id="10090.ENSMUSP00000073667"/>
<dbReference type="Allergome" id="478">
    <property type="allergen name" value="Mus m 1"/>
</dbReference>
<dbReference type="iPTMnet" id="Q5FW60"/>
<dbReference type="PhosphoSitePlus" id="Q5FW60"/>
<dbReference type="SwissPalm" id="Q5FW60"/>
<dbReference type="CPTAC" id="non-CPTAC-3659"/>
<dbReference type="jPOST" id="Q5FW60"/>
<dbReference type="PaxDb" id="10090-ENSMUSP00000073667"/>
<dbReference type="PeptideAtlas" id="Q5FW60"/>
<dbReference type="ProteomicsDB" id="290225"/>
<dbReference type="DNASU" id="381530"/>
<dbReference type="Ensembl" id="ENSMUST00000074018.4">
    <property type="protein sequence ID" value="ENSMUSP00000073667.4"/>
    <property type="gene ID" value="ENSMUSG00000078672.3"/>
</dbReference>
<dbReference type="GeneID" id="381530"/>
<dbReference type="KEGG" id="mmu:381530"/>
<dbReference type="UCSC" id="uc008tbr.1">
    <property type="organism name" value="mouse"/>
</dbReference>
<dbReference type="AGR" id="MGI:3651981"/>
<dbReference type="CTD" id="381530"/>
<dbReference type="MGI" id="MGI:3651981">
    <property type="gene designation" value="Mup20"/>
</dbReference>
<dbReference type="VEuPathDB" id="HostDB:ENSMUSG00000078672"/>
<dbReference type="eggNOG" id="ENOG502S6GK">
    <property type="taxonomic scope" value="Eukaryota"/>
</dbReference>
<dbReference type="GeneTree" id="ENSGT01050000244868"/>
<dbReference type="HOGENOM" id="CLU_094061_4_0_1"/>
<dbReference type="InParanoid" id="Q5FW60"/>
<dbReference type="OMA" id="GVYADEY"/>
<dbReference type="OrthoDB" id="9048943at2759"/>
<dbReference type="PhylomeDB" id="Q5FW60"/>
<dbReference type="TreeFam" id="TF338197"/>
<dbReference type="BioGRID-ORCS" id="381530">
    <property type="hits" value="3 hits in 44 CRISPR screens"/>
</dbReference>
<dbReference type="ChiTaRS" id="Mup20">
    <property type="organism name" value="mouse"/>
</dbReference>
<dbReference type="EvolutionaryTrace" id="Q5FW60"/>
<dbReference type="PRO" id="PR:Q5FW60"/>
<dbReference type="Proteomes" id="UP000000589">
    <property type="component" value="Chromosome 4"/>
</dbReference>
<dbReference type="RNAct" id="Q5FW60">
    <property type="molecule type" value="protein"/>
</dbReference>
<dbReference type="Bgee" id="ENSMUSG00000078672">
    <property type="expression patterns" value="Expressed in liver and 22 other cell types or tissues"/>
</dbReference>
<dbReference type="GO" id="GO:0005576">
    <property type="term" value="C:extracellular region"/>
    <property type="evidence" value="ECO:0000314"/>
    <property type="project" value="UniProtKB"/>
</dbReference>
<dbReference type="GO" id="GO:0000772">
    <property type="term" value="F:mating pheromone activity"/>
    <property type="evidence" value="ECO:0000314"/>
    <property type="project" value="UniProtKB"/>
</dbReference>
<dbReference type="GO" id="GO:0005550">
    <property type="term" value="F:pheromone binding"/>
    <property type="evidence" value="ECO:0000314"/>
    <property type="project" value="UniProtKB"/>
</dbReference>
<dbReference type="GO" id="GO:0036094">
    <property type="term" value="F:small molecule binding"/>
    <property type="evidence" value="ECO:0007669"/>
    <property type="project" value="InterPro"/>
</dbReference>
<dbReference type="GO" id="GO:0008355">
    <property type="term" value="P:olfactory learning"/>
    <property type="evidence" value="ECO:0000314"/>
    <property type="project" value="UniProtKB"/>
</dbReference>
<dbReference type="GO" id="GO:2000179">
    <property type="term" value="P:positive regulation of neural precursor cell proliferation"/>
    <property type="evidence" value="ECO:0000314"/>
    <property type="project" value="UniProtKB"/>
</dbReference>
<dbReference type="GO" id="GO:0050769">
    <property type="term" value="P:positive regulation of neurogenesis"/>
    <property type="evidence" value="ECO:0000314"/>
    <property type="project" value="UniProtKB"/>
</dbReference>
<dbReference type="GO" id="GO:0071625">
    <property type="term" value="P:vocalization behavior"/>
    <property type="evidence" value="ECO:0000314"/>
    <property type="project" value="UniProtKB"/>
</dbReference>
<dbReference type="CDD" id="cd19428">
    <property type="entry name" value="lipocalin_MUP-like"/>
    <property type="match status" value="1"/>
</dbReference>
<dbReference type="FunFam" id="2.40.128.20:FF:000008">
    <property type="entry name" value="Major urinary protein"/>
    <property type="match status" value="1"/>
</dbReference>
<dbReference type="Gene3D" id="2.40.128.20">
    <property type="match status" value="1"/>
</dbReference>
<dbReference type="InterPro" id="IPR012674">
    <property type="entry name" value="Calycin"/>
</dbReference>
<dbReference type="InterPro" id="IPR002345">
    <property type="entry name" value="Lipocalin"/>
</dbReference>
<dbReference type="InterPro" id="IPR022272">
    <property type="entry name" value="Lipocalin_CS"/>
</dbReference>
<dbReference type="InterPro" id="IPR000566">
    <property type="entry name" value="Lipocln_cytosolic_FA-bd_dom"/>
</dbReference>
<dbReference type="InterPro" id="IPR002971">
    <property type="entry name" value="Maj_urinary"/>
</dbReference>
<dbReference type="PANTHER" id="PTHR11430">
    <property type="entry name" value="LIPOCALIN"/>
    <property type="match status" value="1"/>
</dbReference>
<dbReference type="PANTHER" id="PTHR11430:SF76">
    <property type="entry name" value="MAJOR URINARY PROTEIN 1-RELATED"/>
    <property type="match status" value="1"/>
</dbReference>
<dbReference type="Pfam" id="PF00061">
    <property type="entry name" value="Lipocalin"/>
    <property type="match status" value="1"/>
</dbReference>
<dbReference type="PRINTS" id="PR00179">
    <property type="entry name" value="LIPOCALIN"/>
</dbReference>
<dbReference type="PRINTS" id="PR01221">
    <property type="entry name" value="MAJORURINARY"/>
</dbReference>
<dbReference type="SUPFAM" id="SSF50814">
    <property type="entry name" value="Lipocalins"/>
    <property type="match status" value="1"/>
</dbReference>
<dbReference type="PROSITE" id="PS00213">
    <property type="entry name" value="LIPOCALIN"/>
    <property type="match status" value="1"/>
</dbReference>
<evidence type="ECO:0000250" key="1">
    <source>
        <dbReference type="UniProtKB" id="P11590"/>
    </source>
</evidence>
<evidence type="ECO:0000255" key="2"/>
<evidence type="ECO:0000269" key="3">
    <source>
    </source>
</evidence>
<evidence type="ECO:0000269" key="4">
    <source>
    </source>
</evidence>
<evidence type="ECO:0000269" key="5">
    <source>
    </source>
</evidence>
<evidence type="ECO:0000269" key="6">
    <source>
    </source>
</evidence>
<evidence type="ECO:0000269" key="7">
    <source>
    </source>
</evidence>
<evidence type="ECO:0000269" key="8">
    <source>
    </source>
</evidence>
<evidence type="ECO:0000269" key="9">
    <source>
    </source>
</evidence>
<evidence type="ECO:0000269" key="10">
    <source>
    </source>
</evidence>
<evidence type="ECO:0000303" key="11">
    <source>
    </source>
</evidence>
<evidence type="ECO:0000305" key="12"/>
<evidence type="ECO:0000312" key="13">
    <source>
        <dbReference type="EMBL" id="AAH89613.1"/>
    </source>
</evidence>
<evidence type="ECO:0000312" key="14">
    <source>
        <dbReference type="EMBL" id="AAH92096.1"/>
    </source>
</evidence>
<evidence type="ECO:0000312" key="15">
    <source>
        <dbReference type="EMBL" id="ACF70718.1"/>
    </source>
</evidence>
<evidence type="ECO:0000312" key="16">
    <source>
        <dbReference type="EMBL" id="CAP58483.1"/>
    </source>
</evidence>
<evidence type="ECO:0000312" key="17">
    <source>
        <dbReference type="EMBL" id="DAA06315.1"/>
    </source>
</evidence>
<evidence type="ECO:0000312" key="18">
    <source>
        <dbReference type="MGI" id="MGI:3651981"/>
    </source>
</evidence>
<evidence type="ECO:0007744" key="19">
    <source>
        <dbReference type="PDB" id="2L9C"/>
    </source>
</evidence>
<evidence type="ECO:0007829" key="20">
    <source>
        <dbReference type="PDB" id="2L9C"/>
    </source>
</evidence>
<accession>Q5FW60</accession>
<protein>
    <recommendedName>
        <fullName evidence="18">Major urinary protein 20</fullName>
    </recommendedName>
    <alternativeName>
        <fullName evidence="11">Darcin</fullName>
    </alternativeName>
    <alternativeName>
        <fullName evidence="15">Major urinary protein 24</fullName>
    </alternativeName>
</protein>
<proteinExistence type="evidence at protein level"/>